<keyword id="KW-0963">Cytoplasm</keyword>
<keyword id="KW-0413">Isomerase</keyword>
<keyword id="KW-0627">Porphyrin biosynthesis</keyword>
<keyword id="KW-0663">Pyridoxal phosphate</keyword>
<keyword id="KW-1185">Reference proteome</keyword>
<name>GSA_NITMU</name>
<comment type="catalytic activity">
    <reaction evidence="1">
        <text>(S)-4-amino-5-oxopentanoate = 5-aminolevulinate</text>
        <dbReference type="Rhea" id="RHEA:14265"/>
        <dbReference type="ChEBI" id="CHEBI:57501"/>
        <dbReference type="ChEBI" id="CHEBI:356416"/>
        <dbReference type="EC" id="5.4.3.8"/>
    </reaction>
</comment>
<comment type="cofactor">
    <cofactor evidence="1">
        <name>pyridoxal 5'-phosphate</name>
        <dbReference type="ChEBI" id="CHEBI:597326"/>
    </cofactor>
</comment>
<comment type="pathway">
    <text evidence="1">Porphyrin-containing compound metabolism; protoporphyrin-IX biosynthesis; 5-aminolevulinate from L-glutamyl-tRNA(Glu): step 2/2.</text>
</comment>
<comment type="subunit">
    <text evidence="1">Homodimer.</text>
</comment>
<comment type="subcellular location">
    <subcellularLocation>
        <location evidence="1">Cytoplasm</location>
    </subcellularLocation>
</comment>
<comment type="similarity">
    <text evidence="1">Belongs to the class-III pyridoxal-phosphate-dependent aminotransferase family. HemL subfamily.</text>
</comment>
<organism>
    <name type="scientific">Nitrosospira multiformis (strain ATCC 25196 / NCIMB 11849 / C 71)</name>
    <dbReference type="NCBI Taxonomy" id="323848"/>
    <lineage>
        <taxon>Bacteria</taxon>
        <taxon>Pseudomonadati</taxon>
        <taxon>Pseudomonadota</taxon>
        <taxon>Betaproteobacteria</taxon>
        <taxon>Nitrosomonadales</taxon>
        <taxon>Nitrosomonadaceae</taxon>
        <taxon>Nitrosospira</taxon>
    </lineage>
</organism>
<dbReference type="EC" id="5.4.3.8" evidence="1"/>
<dbReference type="EMBL" id="CP000103">
    <property type="protein sequence ID" value="ABB75916.1"/>
    <property type="molecule type" value="Genomic_DNA"/>
</dbReference>
<dbReference type="SMR" id="Q2Y5Q5"/>
<dbReference type="STRING" id="323848.Nmul_A2629"/>
<dbReference type="KEGG" id="nmu:Nmul_A2629"/>
<dbReference type="eggNOG" id="COG0001">
    <property type="taxonomic scope" value="Bacteria"/>
</dbReference>
<dbReference type="HOGENOM" id="CLU_016922_1_5_4"/>
<dbReference type="UniPathway" id="UPA00251">
    <property type="reaction ID" value="UER00317"/>
</dbReference>
<dbReference type="Proteomes" id="UP000002718">
    <property type="component" value="Chromosome"/>
</dbReference>
<dbReference type="GO" id="GO:0005737">
    <property type="term" value="C:cytoplasm"/>
    <property type="evidence" value="ECO:0007669"/>
    <property type="project" value="UniProtKB-SubCell"/>
</dbReference>
<dbReference type="GO" id="GO:0042286">
    <property type="term" value="F:glutamate-1-semialdehyde 2,1-aminomutase activity"/>
    <property type="evidence" value="ECO:0007669"/>
    <property type="project" value="UniProtKB-UniRule"/>
</dbReference>
<dbReference type="GO" id="GO:0030170">
    <property type="term" value="F:pyridoxal phosphate binding"/>
    <property type="evidence" value="ECO:0007669"/>
    <property type="project" value="InterPro"/>
</dbReference>
<dbReference type="GO" id="GO:0008483">
    <property type="term" value="F:transaminase activity"/>
    <property type="evidence" value="ECO:0007669"/>
    <property type="project" value="InterPro"/>
</dbReference>
<dbReference type="GO" id="GO:0006782">
    <property type="term" value="P:protoporphyrinogen IX biosynthetic process"/>
    <property type="evidence" value="ECO:0007669"/>
    <property type="project" value="UniProtKB-UniRule"/>
</dbReference>
<dbReference type="CDD" id="cd00610">
    <property type="entry name" value="OAT_like"/>
    <property type="match status" value="1"/>
</dbReference>
<dbReference type="FunFam" id="3.40.640.10:FF:000021">
    <property type="entry name" value="Glutamate-1-semialdehyde 2,1-aminomutase"/>
    <property type="match status" value="1"/>
</dbReference>
<dbReference type="Gene3D" id="3.90.1150.10">
    <property type="entry name" value="Aspartate Aminotransferase, domain 1"/>
    <property type="match status" value="1"/>
</dbReference>
<dbReference type="Gene3D" id="3.40.640.10">
    <property type="entry name" value="Type I PLP-dependent aspartate aminotransferase-like (Major domain)"/>
    <property type="match status" value="1"/>
</dbReference>
<dbReference type="HAMAP" id="MF_00375">
    <property type="entry name" value="HemL_aminotrans_3"/>
    <property type="match status" value="1"/>
</dbReference>
<dbReference type="InterPro" id="IPR004639">
    <property type="entry name" value="4pyrrol_synth_GluAld_NH2Trfase"/>
</dbReference>
<dbReference type="InterPro" id="IPR005814">
    <property type="entry name" value="Aminotrans_3"/>
</dbReference>
<dbReference type="InterPro" id="IPR049704">
    <property type="entry name" value="Aminotrans_3_PPA_site"/>
</dbReference>
<dbReference type="InterPro" id="IPR015424">
    <property type="entry name" value="PyrdxlP-dep_Trfase"/>
</dbReference>
<dbReference type="InterPro" id="IPR015421">
    <property type="entry name" value="PyrdxlP-dep_Trfase_major"/>
</dbReference>
<dbReference type="InterPro" id="IPR015422">
    <property type="entry name" value="PyrdxlP-dep_Trfase_small"/>
</dbReference>
<dbReference type="NCBIfam" id="TIGR00713">
    <property type="entry name" value="hemL"/>
    <property type="match status" value="1"/>
</dbReference>
<dbReference type="NCBIfam" id="NF000818">
    <property type="entry name" value="PRK00062.1"/>
    <property type="match status" value="1"/>
</dbReference>
<dbReference type="PANTHER" id="PTHR43713">
    <property type="entry name" value="GLUTAMATE-1-SEMIALDEHYDE 2,1-AMINOMUTASE"/>
    <property type="match status" value="1"/>
</dbReference>
<dbReference type="PANTHER" id="PTHR43713:SF3">
    <property type="entry name" value="GLUTAMATE-1-SEMIALDEHYDE 2,1-AMINOMUTASE 1, CHLOROPLASTIC-RELATED"/>
    <property type="match status" value="1"/>
</dbReference>
<dbReference type="Pfam" id="PF00202">
    <property type="entry name" value="Aminotran_3"/>
    <property type="match status" value="1"/>
</dbReference>
<dbReference type="SUPFAM" id="SSF53383">
    <property type="entry name" value="PLP-dependent transferases"/>
    <property type="match status" value="1"/>
</dbReference>
<dbReference type="PROSITE" id="PS00600">
    <property type="entry name" value="AA_TRANSFER_CLASS_3"/>
    <property type="match status" value="1"/>
</dbReference>
<feature type="chain" id="PRO_0000243589" description="Glutamate-1-semialdehyde 2,1-aminomutase">
    <location>
        <begin position="1"/>
        <end position="425"/>
    </location>
</feature>
<feature type="modified residue" description="N6-(pyridoxal phosphate)lysine" evidence="1">
    <location>
        <position position="265"/>
    </location>
</feature>
<reference key="1">
    <citation type="submission" date="2005-08" db="EMBL/GenBank/DDBJ databases">
        <title>Complete sequence of chromosome 1 of Nitrosospira multiformis ATCC 25196.</title>
        <authorList>
            <person name="Copeland A."/>
            <person name="Lucas S."/>
            <person name="Lapidus A."/>
            <person name="Barry K."/>
            <person name="Detter J.C."/>
            <person name="Glavina T."/>
            <person name="Hammon N."/>
            <person name="Israni S."/>
            <person name="Pitluck S."/>
            <person name="Chain P."/>
            <person name="Malfatti S."/>
            <person name="Shin M."/>
            <person name="Vergez L."/>
            <person name="Schmutz J."/>
            <person name="Larimer F."/>
            <person name="Land M."/>
            <person name="Hauser L."/>
            <person name="Kyrpides N."/>
            <person name="Lykidis A."/>
            <person name="Richardson P."/>
        </authorList>
    </citation>
    <scope>NUCLEOTIDE SEQUENCE [LARGE SCALE GENOMIC DNA]</scope>
    <source>
        <strain>ATCC 25196 / NCIMB 11849 / C 71</strain>
    </source>
</reference>
<sequence>MSRNQQLFEQSQKFIPGGVNSPVRAFKSVGGTPVFFRKGEGAYAWDADDKSYIDYVGSWGPLILGHAHPEVVDAVYAAAKNGLTFGAPTEAELEIAELLCRLVPSIEQVRLVSSGTEATMSAIRLARGYTARNRIIKFEGCYHGHDDALLVKAGSGALTFGHPSSAGVPVETASSTVVLDYNDLAGVEQAFNQFGAEIAAVIVEPVAGNMNLIAPQPGFLAGLRELCTRHGSVLIFDEVMTGFRVGLECAQGLYGIKPDLTTLGKVIGGGMPMAAFGGRREIMQCLAPVGAVYQAGTLSGNPVAVAAGLATLKLVQVPGFYDKLAARTRKLTEGLAAAAAKQGVVFCAEAVGGMFGLYFRESAPKSYAEVMSCDREAFNGFFHAMLEEGIYFAPSAFEAGFVSAAHGDAEISKTLATAEKIFARE</sequence>
<proteinExistence type="inferred from homology"/>
<protein>
    <recommendedName>
        <fullName evidence="1">Glutamate-1-semialdehyde 2,1-aminomutase</fullName>
        <shortName evidence="1">GSA</shortName>
        <ecNumber evidence="1">5.4.3.8</ecNumber>
    </recommendedName>
    <alternativeName>
        <fullName evidence="1">Glutamate-1-semialdehyde aminotransferase</fullName>
        <shortName evidence="1">GSA-AT</shortName>
    </alternativeName>
</protein>
<evidence type="ECO:0000255" key="1">
    <source>
        <dbReference type="HAMAP-Rule" id="MF_00375"/>
    </source>
</evidence>
<gene>
    <name evidence="1" type="primary">hemL</name>
    <name type="ordered locus">Nmul_A2629</name>
</gene>
<accession>Q2Y5Q5</accession>